<name>YKP7_KLULA</name>
<organism>
    <name type="scientific">Kluyveromyces lactis (strain ATCC 8585 / CBS 2359 / DSM 70799 / NBRC 1267 / NRRL Y-1140 / WM37)</name>
    <name type="common">Yeast</name>
    <name type="synonym">Candida sphaerica</name>
    <dbReference type="NCBI Taxonomy" id="284590"/>
    <lineage>
        <taxon>Eukaryota</taxon>
        <taxon>Fungi</taxon>
        <taxon>Dikarya</taxon>
        <taxon>Ascomycota</taxon>
        <taxon>Saccharomycotina</taxon>
        <taxon>Saccharomycetes</taxon>
        <taxon>Saccharomycetales</taxon>
        <taxon>Saccharomycetaceae</taxon>
        <taxon>Kluyveromyces</taxon>
    </lineage>
</organism>
<protein>
    <recommendedName>
        <fullName>Uncharacterized killer plasmid pGKl-2 protein 7</fullName>
    </recommendedName>
</protein>
<proteinExistence type="predicted"/>
<dbReference type="EMBL" id="X07776">
    <property type="protein sequence ID" value="CAA30608.1"/>
    <property type="molecule type" value="Genomic_DNA"/>
</dbReference>
<dbReference type="EMBL" id="X07946">
    <property type="protein sequence ID" value="CAA30769.1"/>
    <property type="molecule type" value="Genomic_DNA"/>
</dbReference>
<dbReference type="PIR" id="S00965">
    <property type="entry name" value="S00965"/>
</dbReference>
<dbReference type="SMR" id="P05473"/>
<dbReference type="STRING" id="284590.P05473"/>
<dbReference type="PaxDb" id="284590-P05473"/>
<dbReference type="InParanoid" id="P05473"/>
<keyword id="KW-0614">Plasmid</keyword>
<reference key="1">
    <citation type="journal article" date="1988" name="Nucleic Acids Res.">
        <title>Genome organization of the killer plasmid pGKL2 from Kluyveromyces lactis.</title>
        <authorList>
            <person name="Tommasino M."/>
            <person name="Ricci S."/>
            <person name="Galeotti C.L."/>
        </authorList>
    </citation>
    <scope>NUCLEOTIDE SEQUENCE [GENOMIC DNA]</scope>
    <source>
        <strain>ATCC 8585 / CBS 2359 / DSM 70799 / NBRC 1267 / NRRL Y-1140 / WM37</strain>
    </source>
</reference>
<reference key="2">
    <citation type="journal article" date="1988" name="Nucleic Acids Res.">
        <title>Extranuclear gene expression in yeast: evidence for a plasmid-encoded RNA polymerase of unique structure.</title>
        <authorList>
            <person name="Wilson D.W."/>
            <person name="Meacock P.A."/>
        </authorList>
    </citation>
    <scope>NUCLEOTIDE SEQUENCE [GENOMIC DNA]</scope>
    <source>
        <strain>ATCC 8585 / CBS 2359 / DSM 70799 / NBRC 1267 / NRRL Y-1140 / WM37</strain>
    </source>
</reference>
<comment type="function">
    <text>The presence of the two linear plasmids, termed pGKL1 and pGKL2, in strains of Kluyveromyces lactis confers the killer phenotype to the host cell, by promoting the secretion of a toxin able to inhibit the growth of sensitive strains.</text>
</comment>
<sequence length="132" mass="15499">MNENIISNLNYFSEITQRTLSAFHFSGTDSTLEDEVEELKRFVSKNRFKKLIKIDILDDNRYCRHFSDGSKDIVDEEDINTKVAYDKNELFEVIDRALSKDISPIMSIKLSRNIQLVENKKIENPSEKIFFL</sequence>
<geneLocation type="plasmid">
    <name>pGKl-2</name>
</geneLocation>
<feature type="chain" id="PRO_0000066280" description="Uncharacterized killer plasmid pGKl-2 protein 7">
    <location>
        <begin position="1"/>
        <end position="132"/>
    </location>
</feature>
<accession>P05473</accession>